<name>Y1263_SYNY3</name>
<feature type="chain" id="PRO_0000206138" description="Uncharacterized transporter sll1263">
    <location>
        <begin position="1"/>
        <end position="310"/>
    </location>
</feature>
<feature type="transmembrane region" description="Helical" evidence="1">
    <location>
        <begin position="10"/>
        <end position="30"/>
    </location>
</feature>
<feature type="transmembrane region" description="Helical" evidence="1">
    <location>
        <begin position="44"/>
        <end position="64"/>
    </location>
</feature>
<feature type="transmembrane region" description="Helical" evidence="1">
    <location>
        <begin position="78"/>
        <end position="98"/>
    </location>
</feature>
<feature type="transmembrane region" description="Helical" evidence="1">
    <location>
        <begin position="113"/>
        <end position="133"/>
    </location>
</feature>
<feature type="transmembrane region" description="Helical" evidence="1">
    <location>
        <begin position="161"/>
        <end position="181"/>
    </location>
</feature>
<feature type="region of interest" description="Disordered" evidence="2">
    <location>
        <begin position="285"/>
        <end position="310"/>
    </location>
</feature>
<feature type="compositionally biased region" description="Basic and acidic residues" evidence="2">
    <location>
        <begin position="285"/>
        <end position="297"/>
    </location>
</feature>
<protein>
    <recommendedName>
        <fullName>Uncharacterized transporter sll1263</fullName>
    </recommendedName>
</protein>
<proteinExistence type="inferred from homology"/>
<evidence type="ECO:0000255" key="1"/>
<evidence type="ECO:0000256" key="2">
    <source>
        <dbReference type="SAM" id="MobiDB-lite"/>
    </source>
</evidence>
<evidence type="ECO:0000305" key="3"/>
<accession>P74068</accession>
<keyword id="KW-1003">Cell membrane</keyword>
<keyword id="KW-0472">Membrane</keyword>
<keyword id="KW-1185">Reference proteome</keyword>
<keyword id="KW-0812">Transmembrane</keyword>
<keyword id="KW-1133">Transmembrane helix</keyword>
<keyword id="KW-0813">Transport</keyword>
<gene>
    <name type="ordered locus">sll1263</name>
</gene>
<reference key="1">
    <citation type="journal article" date="1996" name="DNA Res.">
        <title>Sequence analysis of the genome of the unicellular cyanobacterium Synechocystis sp. strain PCC6803. II. Sequence determination of the entire genome and assignment of potential protein-coding regions.</title>
        <authorList>
            <person name="Kaneko T."/>
            <person name="Sato S."/>
            <person name="Kotani H."/>
            <person name="Tanaka A."/>
            <person name="Asamizu E."/>
            <person name="Nakamura Y."/>
            <person name="Miyajima N."/>
            <person name="Hirosawa M."/>
            <person name="Sugiura M."/>
            <person name="Sasamoto S."/>
            <person name="Kimura T."/>
            <person name="Hosouchi T."/>
            <person name="Matsuno A."/>
            <person name="Muraki A."/>
            <person name="Nakazaki N."/>
            <person name="Naruo K."/>
            <person name="Okumura S."/>
            <person name="Shimpo S."/>
            <person name="Takeuchi C."/>
            <person name="Wada T."/>
            <person name="Watanabe A."/>
            <person name="Yamada M."/>
            <person name="Yasuda M."/>
            <person name="Tabata S."/>
        </authorList>
    </citation>
    <scope>NUCLEOTIDE SEQUENCE [LARGE SCALE GENOMIC DNA]</scope>
    <source>
        <strain>ATCC 27184 / PCC 6803 / Kazusa</strain>
    </source>
</reference>
<organism>
    <name type="scientific">Synechocystis sp. (strain ATCC 27184 / PCC 6803 / Kazusa)</name>
    <dbReference type="NCBI Taxonomy" id="1111708"/>
    <lineage>
        <taxon>Bacteria</taxon>
        <taxon>Bacillati</taxon>
        <taxon>Cyanobacteriota</taxon>
        <taxon>Cyanophyceae</taxon>
        <taxon>Synechococcales</taxon>
        <taxon>Merismopediaceae</taxon>
        <taxon>Synechocystis</taxon>
    </lineage>
</organism>
<dbReference type="EMBL" id="BA000022">
    <property type="protein sequence ID" value="BAA18144.1"/>
    <property type="molecule type" value="Genomic_DNA"/>
</dbReference>
<dbReference type="PIR" id="S75583">
    <property type="entry name" value="S75583"/>
</dbReference>
<dbReference type="SMR" id="P74068"/>
<dbReference type="FunCoup" id="P74068">
    <property type="interactions" value="275"/>
</dbReference>
<dbReference type="IntAct" id="P74068">
    <property type="interactions" value="1"/>
</dbReference>
<dbReference type="STRING" id="1148.gene:10499016"/>
<dbReference type="PaxDb" id="1148-1653229"/>
<dbReference type="EnsemblBacteria" id="BAA18144">
    <property type="protein sequence ID" value="BAA18144"/>
    <property type="gene ID" value="BAA18144"/>
</dbReference>
<dbReference type="KEGG" id="syn:sll1263"/>
<dbReference type="eggNOG" id="COG0053">
    <property type="taxonomic scope" value="Bacteria"/>
</dbReference>
<dbReference type="InParanoid" id="P74068"/>
<dbReference type="PhylomeDB" id="P74068"/>
<dbReference type="Proteomes" id="UP000001425">
    <property type="component" value="Chromosome"/>
</dbReference>
<dbReference type="GO" id="GO:0005886">
    <property type="term" value="C:plasma membrane"/>
    <property type="evidence" value="ECO:0000318"/>
    <property type="project" value="GO_Central"/>
</dbReference>
<dbReference type="GO" id="GO:0015086">
    <property type="term" value="F:cadmium ion transmembrane transporter activity"/>
    <property type="evidence" value="ECO:0000318"/>
    <property type="project" value="GO_Central"/>
</dbReference>
<dbReference type="GO" id="GO:0015093">
    <property type="term" value="F:ferrous iron transmembrane transporter activity"/>
    <property type="evidence" value="ECO:0000318"/>
    <property type="project" value="GO_Central"/>
</dbReference>
<dbReference type="GO" id="GO:0015341">
    <property type="term" value="F:zinc efflux antiporter activity"/>
    <property type="evidence" value="ECO:0000318"/>
    <property type="project" value="GO_Central"/>
</dbReference>
<dbReference type="GO" id="GO:0006882">
    <property type="term" value="P:intracellular zinc ion homeostasis"/>
    <property type="evidence" value="ECO:0000318"/>
    <property type="project" value="GO_Central"/>
</dbReference>
<dbReference type="FunFam" id="1.20.1510.10:FF:000001">
    <property type="entry name" value="Ferrous-iron efflux pump FieF"/>
    <property type="match status" value="1"/>
</dbReference>
<dbReference type="FunFam" id="3.30.70.1350:FF:000002">
    <property type="entry name" value="Ferrous-iron efflux pump FieF"/>
    <property type="match status" value="1"/>
</dbReference>
<dbReference type="Gene3D" id="1.20.1510.10">
    <property type="entry name" value="Cation efflux protein transmembrane domain"/>
    <property type="match status" value="1"/>
</dbReference>
<dbReference type="Gene3D" id="3.30.70.1350">
    <property type="entry name" value="Cation efflux protein, cytoplasmic domain"/>
    <property type="match status" value="1"/>
</dbReference>
<dbReference type="InterPro" id="IPR002524">
    <property type="entry name" value="Cation_efflux"/>
</dbReference>
<dbReference type="InterPro" id="IPR027470">
    <property type="entry name" value="Cation_efflux_CTD"/>
</dbReference>
<dbReference type="InterPro" id="IPR036837">
    <property type="entry name" value="Cation_efflux_CTD_sf"/>
</dbReference>
<dbReference type="InterPro" id="IPR027469">
    <property type="entry name" value="Cation_efflux_TMD_sf"/>
</dbReference>
<dbReference type="InterPro" id="IPR050291">
    <property type="entry name" value="CDF_Transporter"/>
</dbReference>
<dbReference type="NCBIfam" id="TIGR01297">
    <property type="entry name" value="CDF"/>
    <property type="match status" value="1"/>
</dbReference>
<dbReference type="PANTHER" id="PTHR43840">
    <property type="entry name" value="MITOCHONDRIAL METAL TRANSPORTER 1-RELATED"/>
    <property type="match status" value="1"/>
</dbReference>
<dbReference type="PANTHER" id="PTHR43840:SF15">
    <property type="entry name" value="MITOCHONDRIAL METAL TRANSPORTER 1-RELATED"/>
    <property type="match status" value="1"/>
</dbReference>
<dbReference type="Pfam" id="PF01545">
    <property type="entry name" value="Cation_efflux"/>
    <property type="match status" value="1"/>
</dbReference>
<dbReference type="Pfam" id="PF16916">
    <property type="entry name" value="ZT_dimer"/>
    <property type="match status" value="1"/>
</dbReference>
<dbReference type="SUPFAM" id="SSF160240">
    <property type="entry name" value="Cation efflux protein cytoplasmic domain-like"/>
    <property type="match status" value="1"/>
</dbReference>
<dbReference type="SUPFAM" id="SSF161111">
    <property type="entry name" value="Cation efflux protein transmembrane domain-like"/>
    <property type="match status" value="1"/>
</dbReference>
<comment type="subcellular location">
    <subcellularLocation>
        <location evidence="3">Cell membrane</location>
        <topology evidence="3">Multi-pass membrane protein</topology>
    </subcellularLocation>
</comment>
<comment type="similarity">
    <text evidence="3">Belongs to the cation diffusion facilitator (CDF) transporter (TC 2.A.4) family.</text>
</comment>
<sequence length="310" mass="33324">MTARLARPYAVLSIGAALATMGLKLGAYAITGSVGLLSDALESTVNLASAIVAFWALSLAATPADSEHPFGHSKAEYFSSGLEGAFIFVAALGIGYSAVERLLSPRPLDQNALGIALAIAATALNGTVAWILWRAGKRLNSIALRADSQHLMTDVWTSVGVVVAVALIFVTGWEWLDPLIALGVGFNVLWTGTHLLRETISSLMDQSLPPAQLQAITSCFLPYEDQGVRFHLLQTRQAGSQSFISFHVLVPGHWTVQRGHDLCEAIETAIAERITGSRVTTHLEPLEDPKSWQHPDEFPPSAPLNRDKPN</sequence>